<organism>
    <name type="scientific">Meriones unguiculatus</name>
    <name type="common">Mongolian jird</name>
    <name type="synonym">Gerbillus unguiculatus</name>
    <dbReference type="NCBI Taxonomy" id="10047"/>
    <lineage>
        <taxon>Eukaryota</taxon>
        <taxon>Metazoa</taxon>
        <taxon>Chordata</taxon>
        <taxon>Craniata</taxon>
        <taxon>Vertebrata</taxon>
        <taxon>Euteleostomi</taxon>
        <taxon>Mammalia</taxon>
        <taxon>Eutheria</taxon>
        <taxon>Euarchontoglires</taxon>
        <taxon>Glires</taxon>
        <taxon>Rodentia</taxon>
        <taxon>Myomorpha</taxon>
        <taxon>Muroidea</taxon>
        <taxon>Muridae</taxon>
        <taxon>Gerbillinae</taxon>
        <taxon>Meriones</taxon>
    </lineage>
</organism>
<sequence length="120" mass="13473">MDYDRRYAAVILVVLSMFLHILHSLPDGDFIIQGCPECKLKENKYFSKGGAPIYQCMGCCFSRAYPTPARSKKTMLVPKNITSEATCCVAKSFTKATVMGNARVENHTECHCSTCYYHKS</sequence>
<accession>Q9ERJ6</accession>
<evidence type="ECO:0000250" key="1"/>
<evidence type="ECO:0000250" key="2">
    <source>
        <dbReference type="UniProtKB" id="P01215"/>
    </source>
</evidence>
<evidence type="ECO:0000305" key="3"/>
<dbReference type="EMBL" id="AF303351">
    <property type="protein sequence ID" value="AAG21399.1"/>
    <property type="molecule type" value="mRNA"/>
</dbReference>
<dbReference type="SMR" id="Q9ERJ6"/>
<dbReference type="GlyCosmos" id="Q9ERJ6">
    <property type="glycosylation" value="2 sites, No reported glycans"/>
</dbReference>
<dbReference type="GO" id="GO:0005615">
    <property type="term" value="C:extracellular space"/>
    <property type="evidence" value="ECO:0000250"/>
    <property type="project" value="UniProtKB"/>
</dbReference>
<dbReference type="GO" id="GO:0016914">
    <property type="term" value="C:follicle-stimulating hormone complex"/>
    <property type="evidence" value="ECO:0000250"/>
    <property type="project" value="UniProtKB"/>
</dbReference>
<dbReference type="GO" id="GO:0016913">
    <property type="term" value="F:follicle-stimulating hormone activity"/>
    <property type="evidence" value="ECO:0000250"/>
    <property type="project" value="UniProtKB"/>
</dbReference>
<dbReference type="GO" id="GO:0007186">
    <property type="term" value="P:G protein-coupled receptor signaling pathway"/>
    <property type="evidence" value="ECO:0000250"/>
    <property type="project" value="UniProtKB"/>
</dbReference>
<dbReference type="GO" id="GO:0010893">
    <property type="term" value="P:positive regulation of steroid biosynthetic process"/>
    <property type="evidence" value="ECO:0000250"/>
    <property type="project" value="UniProtKB"/>
</dbReference>
<dbReference type="GO" id="GO:0010469">
    <property type="term" value="P:regulation of signaling receptor activity"/>
    <property type="evidence" value="ECO:0000250"/>
    <property type="project" value="UniProtKB"/>
</dbReference>
<dbReference type="GO" id="GO:0006590">
    <property type="term" value="P:thyroid hormone generation"/>
    <property type="evidence" value="ECO:0007669"/>
    <property type="project" value="TreeGrafter"/>
</dbReference>
<dbReference type="FunFam" id="2.10.90.10:FF:000011">
    <property type="entry name" value="Glycoprotein hormones alpha chain"/>
    <property type="match status" value="1"/>
</dbReference>
<dbReference type="Gene3D" id="2.10.90.10">
    <property type="entry name" value="Cystine-knot cytokines"/>
    <property type="match status" value="1"/>
</dbReference>
<dbReference type="InterPro" id="IPR029034">
    <property type="entry name" value="Cystine-knot_cytokine"/>
</dbReference>
<dbReference type="InterPro" id="IPR000476">
    <property type="entry name" value="Glyco_hormone"/>
</dbReference>
<dbReference type="PANTHER" id="PTHR11509">
    <property type="entry name" value="GLYCOPROTEIN HORMONE ALPHA CHAIN"/>
    <property type="match status" value="1"/>
</dbReference>
<dbReference type="PANTHER" id="PTHR11509:SF0">
    <property type="entry name" value="GLYCOPROTEIN HORMONES ALPHA CHAIN"/>
    <property type="match status" value="1"/>
</dbReference>
<dbReference type="Pfam" id="PF00236">
    <property type="entry name" value="Hormone_6"/>
    <property type="match status" value="1"/>
</dbReference>
<dbReference type="PRINTS" id="PR00274">
    <property type="entry name" value="GLYCOHORMONE"/>
</dbReference>
<dbReference type="SMART" id="SM00067">
    <property type="entry name" value="GHA"/>
    <property type="match status" value="1"/>
</dbReference>
<dbReference type="SUPFAM" id="SSF57501">
    <property type="entry name" value="Cystine-knot cytokines"/>
    <property type="match status" value="1"/>
</dbReference>
<dbReference type="PROSITE" id="PS00779">
    <property type="entry name" value="GLYCO_HORMONE_ALPHA_1"/>
    <property type="match status" value="1"/>
</dbReference>
<dbReference type="PROSITE" id="PS00780">
    <property type="entry name" value="GLYCO_HORMONE_ALPHA_2"/>
    <property type="match status" value="1"/>
</dbReference>
<dbReference type="PROSITE" id="PS50277">
    <property type="entry name" value="GLYCO_HORMONE_ALPHA_3"/>
    <property type="match status" value="1"/>
</dbReference>
<reference key="1">
    <citation type="journal article" date="2002" name="Mol. Reprod. Dev.">
        <title>Comparison of glycoprotein hormone alpha-subunits of laboratory animals.</title>
        <authorList>
            <person name="Suzuki O."/>
            <person name="Mochida K."/>
            <person name="Yamamoto Y."/>
            <person name="Noguchi Y."/>
            <person name="Takano K."/>
            <person name="Matsuda J."/>
            <person name="Ogura A."/>
        </authorList>
    </citation>
    <scope>NUCLEOTIDE SEQUENCE [MRNA]</scope>
    <source>
        <tissue>Pituitary</tissue>
    </source>
</reference>
<name>GLHA_MERUN</name>
<keyword id="KW-1015">Disulfide bond</keyword>
<keyword id="KW-0325">Glycoprotein</keyword>
<keyword id="KW-0372">Hormone</keyword>
<keyword id="KW-0964">Secreted</keyword>
<keyword id="KW-0732">Signal</keyword>
<protein>
    <recommendedName>
        <fullName>Glycoprotein hormones alpha chain</fullName>
    </recommendedName>
    <alternativeName>
        <fullName>Anterior pituitary glycoprotein hormones common subunit alpha</fullName>
    </alternativeName>
    <alternativeName>
        <fullName>Follicle-stimulating hormone alpha chain</fullName>
        <shortName>FSH-alpha</shortName>
    </alternativeName>
    <alternativeName>
        <fullName>Follitropin alpha chain</fullName>
    </alternativeName>
    <alternativeName>
        <fullName>Luteinizing hormone alpha chain</fullName>
        <shortName>LSH-alpha</shortName>
    </alternativeName>
    <alternativeName>
        <fullName>Lutropin alpha chain</fullName>
    </alternativeName>
    <alternativeName>
        <fullName>Thyroid-stimulating hormone alpha chain</fullName>
        <shortName>TSH-alpha</shortName>
    </alternativeName>
    <alternativeName>
        <fullName>Thyrotropin alpha chain</fullName>
    </alternativeName>
</protein>
<proteinExistence type="evidence at transcript level"/>
<feature type="signal peptide" evidence="1">
    <location>
        <begin position="1"/>
        <end position="24"/>
    </location>
</feature>
<feature type="chain" id="PRO_0000011645" description="Glycoprotein hormones alpha chain">
    <location>
        <begin position="25"/>
        <end position="120"/>
    </location>
</feature>
<feature type="glycosylation site" description="N-linked (GlcNAc...) asparagine" evidence="2">
    <location>
        <position position="80"/>
    </location>
</feature>
<feature type="glycosylation site" description="N-linked (GlcNAc...) asparagine" evidence="2">
    <location>
        <position position="106"/>
    </location>
</feature>
<feature type="disulfide bond" evidence="2">
    <location>
        <begin position="35"/>
        <end position="59"/>
    </location>
</feature>
<feature type="disulfide bond" evidence="2">
    <location>
        <begin position="38"/>
        <end position="88"/>
    </location>
</feature>
<feature type="disulfide bond" evidence="2">
    <location>
        <begin position="56"/>
        <end position="110"/>
    </location>
</feature>
<feature type="disulfide bond" evidence="2">
    <location>
        <begin position="60"/>
        <end position="112"/>
    </location>
</feature>
<feature type="disulfide bond" evidence="2">
    <location>
        <begin position="87"/>
        <end position="115"/>
    </location>
</feature>
<gene>
    <name type="primary">CGA</name>
</gene>
<comment type="function">
    <text evidence="2">Shared alpha chain of the active heterodimeric glycoprotein hormones thyrotropin/thyroid stimulating hormone/TSH, lutropin/luteinizing hormone/LH and follitropin/follicle stimulating hormone/FSH. These hormones bind specific receptors on target cells that in turn activate downstream signaling pathways.</text>
</comment>
<comment type="subunit">
    <text evidence="2">Heterodimer. The active hormones thyrotropin, lutropin and follitropin are heterodimers composed of CGA, a common alpha chain described here and a unique beta chain which confers their biological specificity to the hormones: TSHB for thyrotropin, LHB for lutropin and FSHB for follitropin.</text>
</comment>
<comment type="subcellular location">
    <subcellularLocation>
        <location evidence="2">Secreted</location>
    </subcellularLocation>
</comment>
<comment type="similarity">
    <text evidence="3">Belongs to the glycoprotein hormones subunit alpha family.</text>
</comment>